<reference key="1">
    <citation type="submission" date="2009-03" db="EMBL/GenBank/DDBJ databases">
        <title>Complete genome sequence of Edwardsiella ictaluri 93-146.</title>
        <authorList>
            <person name="Williams M.L."/>
            <person name="Gillaspy A.F."/>
            <person name="Dyer D.W."/>
            <person name="Thune R.L."/>
            <person name="Waldbieser G.C."/>
            <person name="Schuster S.C."/>
            <person name="Gipson J."/>
            <person name="Zaitshik J."/>
            <person name="Landry C."/>
            <person name="Lawrence M.L."/>
        </authorList>
    </citation>
    <scope>NUCLEOTIDE SEQUENCE [LARGE SCALE GENOMIC DNA]</scope>
    <source>
        <strain>93-146</strain>
    </source>
</reference>
<accession>C5BCH3</accession>
<protein>
    <recommendedName>
        <fullName evidence="1">Transcriptional repressor NrdR</fullName>
    </recommendedName>
</protein>
<feature type="chain" id="PRO_1000206115" description="Transcriptional repressor NrdR">
    <location>
        <begin position="1"/>
        <end position="149"/>
    </location>
</feature>
<feature type="domain" description="ATP-cone" evidence="1">
    <location>
        <begin position="49"/>
        <end position="139"/>
    </location>
</feature>
<feature type="zinc finger region" evidence="1">
    <location>
        <begin position="3"/>
        <end position="34"/>
    </location>
</feature>
<keyword id="KW-0067">ATP-binding</keyword>
<keyword id="KW-0238">DNA-binding</keyword>
<keyword id="KW-0479">Metal-binding</keyword>
<keyword id="KW-0547">Nucleotide-binding</keyword>
<keyword id="KW-0678">Repressor</keyword>
<keyword id="KW-0804">Transcription</keyword>
<keyword id="KW-0805">Transcription regulation</keyword>
<keyword id="KW-0862">Zinc</keyword>
<keyword id="KW-0863">Zinc-finger</keyword>
<proteinExistence type="inferred from homology"/>
<sequence>MHCPFCSAVDTKVIDSRLVGDGSQVRRRRQCLVCNERFTTFEVAELVMPRVVKSNGVREPFNEDKLRSGMLKALEKRPVNSDDVEMAISHIKSQLRATGEREVATKMVGNLVMDALKKLDKVAYIRFASVYRSFEDVREFGEEIARLQE</sequence>
<gene>
    <name evidence="1" type="primary">nrdR</name>
    <name type="ordered locus">NT01EI_1055</name>
</gene>
<organism>
    <name type="scientific">Edwardsiella ictaluri (strain 93-146)</name>
    <dbReference type="NCBI Taxonomy" id="634503"/>
    <lineage>
        <taxon>Bacteria</taxon>
        <taxon>Pseudomonadati</taxon>
        <taxon>Pseudomonadota</taxon>
        <taxon>Gammaproteobacteria</taxon>
        <taxon>Enterobacterales</taxon>
        <taxon>Hafniaceae</taxon>
        <taxon>Edwardsiella</taxon>
    </lineage>
</organism>
<comment type="function">
    <text evidence="1">Negatively regulates transcription of bacterial ribonucleotide reductase nrd genes and operons by binding to NrdR-boxes.</text>
</comment>
<comment type="cofactor">
    <cofactor evidence="1">
        <name>Zn(2+)</name>
        <dbReference type="ChEBI" id="CHEBI:29105"/>
    </cofactor>
    <text evidence="1">Binds 1 zinc ion.</text>
</comment>
<comment type="similarity">
    <text evidence="1">Belongs to the NrdR family.</text>
</comment>
<name>NRDR_EDWI9</name>
<dbReference type="EMBL" id="CP001600">
    <property type="protein sequence ID" value="ACR68267.1"/>
    <property type="molecule type" value="Genomic_DNA"/>
</dbReference>
<dbReference type="RefSeq" id="WP_015870448.1">
    <property type="nucleotide sequence ID" value="NZ_CP169062.1"/>
</dbReference>
<dbReference type="SMR" id="C5BCH3"/>
<dbReference type="STRING" id="67780.B6E78_15645"/>
<dbReference type="GeneID" id="69538089"/>
<dbReference type="KEGG" id="eic:NT01EI_1055"/>
<dbReference type="PATRIC" id="fig|634503.3.peg.955"/>
<dbReference type="HOGENOM" id="CLU_108412_0_0_6"/>
<dbReference type="OrthoDB" id="9807461at2"/>
<dbReference type="Proteomes" id="UP000001485">
    <property type="component" value="Chromosome"/>
</dbReference>
<dbReference type="GO" id="GO:0005524">
    <property type="term" value="F:ATP binding"/>
    <property type="evidence" value="ECO:0007669"/>
    <property type="project" value="UniProtKB-KW"/>
</dbReference>
<dbReference type="GO" id="GO:0003677">
    <property type="term" value="F:DNA binding"/>
    <property type="evidence" value="ECO:0007669"/>
    <property type="project" value="UniProtKB-KW"/>
</dbReference>
<dbReference type="GO" id="GO:0008270">
    <property type="term" value="F:zinc ion binding"/>
    <property type="evidence" value="ECO:0007669"/>
    <property type="project" value="UniProtKB-UniRule"/>
</dbReference>
<dbReference type="GO" id="GO:0045892">
    <property type="term" value="P:negative regulation of DNA-templated transcription"/>
    <property type="evidence" value="ECO:0007669"/>
    <property type="project" value="UniProtKB-UniRule"/>
</dbReference>
<dbReference type="HAMAP" id="MF_00440">
    <property type="entry name" value="NrdR"/>
    <property type="match status" value="1"/>
</dbReference>
<dbReference type="InterPro" id="IPR005144">
    <property type="entry name" value="ATP-cone_dom"/>
</dbReference>
<dbReference type="InterPro" id="IPR055173">
    <property type="entry name" value="NrdR-like_N"/>
</dbReference>
<dbReference type="InterPro" id="IPR003796">
    <property type="entry name" value="RNR_NrdR-like"/>
</dbReference>
<dbReference type="NCBIfam" id="TIGR00244">
    <property type="entry name" value="transcriptional regulator NrdR"/>
    <property type="match status" value="1"/>
</dbReference>
<dbReference type="PANTHER" id="PTHR30455">
    <property type="entry name" value="TRANSCRIPTIONAL REPRESSOR NRDR"/>
    <property type="match status" value="1"/>
</dbReference>
<dbReference type="PANTHER" id="PTHR30455:SF2">
    <property type="entry name" value="TRANSCRIPTIONAL REPRESSOR NRDR"/>
    <property type="match status" value="1"/>
</dbReference>
<dbReference type="Pfam" id="PF03477">
    <property type="entry name" value="ATP-cone"/>
    <property type="match status" value="1"/>
</dbReference>
<dbReference type="Pfam" id="PF22811">
    <property type="entry name" value="Zn_ribbon_NrdR"/>
    <property type="match status" value="1"/>
</dbReference>
<dbReference type="PROSITE" id="PS51161">
    <property type="entry name" value="ATP_CONE"/>
    <property type="match status" value="1"/>
</dbReference>
<evidence type="ECO:0000255" key="1">
    <source>
        <dbReference type="HAMAP-Rule" id="MF_00440"/>
    </source>
</evidence>